<proteinExistence type="inferred from homology"/>
<sequence length="227" mass="24701">MRLTYFGHSAFLLELARTRLLFDPYLRENPHGSVDPKSVPCDLVFCSHAHSDHVGDALELARLHHAKIVAPYELAEHFAAQGAETIDLMPGGGVTLPWGRIDMTPAIHGSALELGDGKTLSMGPPSGFVVRADGQSLYHAGDTALFGDMRLIGRHGIDVALLPIGDFYTMGPADAVEALHLLRPRLAIPMHFNSNPKIRVDPHRFAAEARRTGHPVRVMSPGETIEV</sequence>
<organism>
    <name type="scientific">Opitutus terrae (strain DSM 11246 / JCM 15787 / PB90-1)</name>
    <dbReference type="NCBI Taxonomy" id="452637"/>
    <lineage>
        <taxon>Bacteria</taxon>
        <taxon>Pseudomonadati</taxon>
        <taxon>Verrucomicrobiota</taxon>
        <taxon>Opitutia</taxon>
        <taxon>Opitutales</taxon>
        <taxon>Opitutaceae</taxon>
        <taxon>Opitutus</taxon>
    </lineage>
</organism>
<accession>B1ZNY5</accession>
<feature type="chain" id="PRO_0000367196" description="UPF0173 metal-dependent hydrolase Oter_4201">
    <location>
        <begin position="1"/>
        <end position="227"/>
    </location>
</feature>
<dbReference type="EMBL" id="CP001032">
    <property type="protein sequence ID" value="ACB77474.1"/>
    <property type="molecule type" value="Genomic_DNA"/>
</dbReference>
<dbReference type="RefSeq" id="WP_012377002.1">
    <property type="nucleotide sequence ID" value="NC_010571.1"/>
</dbReference>
<dbReference type="SMR" id="B1ZNY5"/>
<dbReference type="STRING" id="452637.Oter_4201"/>
<dbReference type="KEGG" id="ote:Oter_4201"/>
<dbReference type="eggNOG" id="COG2220">
    <property type="taxonomic scope" value="Bacteria"/>
</dbReference>
<dbReference type="HOGENOM" id="CLU_070010_4_1_0"/>
<dbReference type="OrthoDB" id="9789133at2"/>
<dbReference type="Proteomes" id="UP000007013">
    <property type="component" value="Chromosome"/>
</dbReference>
<dbReference type="GO" id="GO:0016787">
    <property type="term" value="F:hydrolase activity"/>
    <property type="evidence" value="ECO:0007669"/>
    <property type="project" value="UniProtKB-UniRule"/>
</dbReference>
<dbReference type="Gene3D" id="3.60.15.10">
    <property type="entry name" value="Ribonuclease Z/Hydroxyacylglutathione hydrolase-like"/>
    <property type="match status" value="1"/>
</dbReference>
<dbReference type="HAMAP" id="MF_00457">
    <property type="entry name" value="UPF0173"/>
    <property type="match status" value="1"/>
</dbReference>
<dbReference type="InterPro" id="IPR001279">
    <property type="entry name" value="Metallo-B-lactamas"/>
</dbReference>
<dbReference type="InterPro" id="IPR036866">
    <property type="entry name" value="RibonucZ/Hydroxyglut_hydro"/>
</dbReference>
<dbReference type="InterPro" id="IPR022877">
    <property type="entry name" value="UPF0173"/>
</dbReference>
<dbReference type="InterPro" id="IPR050114">
    <property type="entry name" value="UPF0173_UPF0282_UlaG_hydrolase"/>
</dbReference>
<dbReference type="NCBIfam" id="NF001911">
    <property type="entry name" value="PRK00685.1"/>
    <property type="match status" value="1"/>
</dbReference>
<dbReference type="PANTHER" id="PTHR43546:SF3">
    <property type="entry name" value="UPF0173 METAL-DEPENDENT HYDROLASE MJ1163"/>
    <property type="match status" value="1"/>
</dbReference>
<dbReference type="PANTHER" id="PTHR43546">
    <property type="entry name" value="UPF0173 METAL-DEPENDENT HYDROLASE MJ1163-RELATED"/>
    <property type="match status" value="1"/>
</dbReference>
<dbReference type="Pfam" id="PF12706">
    <property type="entry name" value="Lactamase_B_2"/>
    <property type="match status" value="1"/>
</dbReference>
<dbReference type="SMART" id="SM00849">
    <property type="entry name" value="Lactamase_B"/>
    <property type="match status" value="1"/>
</dbReference>
<dbReference type="SUPFAM" id="SSF56281">
    <property type="entry name" value="Metallo-hydrolase/oxidoreductase"/>
    <property type="match status" value="1"/>
</dbReference>
<name>Y4201_OPITP</name>
<evidence type="ECO:0000255" key="1">
    <source>
        <dbReference type="HAMAP-Rule" id="MF_00457"/>
    </source>
</evidence>
<keyword id="KW-0378">Hydrolase</keyword>
<keyword id="KW-1185">Reference proteome</keyword>
<reference key="1">
    <citation type="journal article" date="2011" name="J. Bacteriol.">
        <title>Genome sequence of the verrucomicrobium Opitutus terrae PB90-1, an abundant inhabitant of rice paddy soil ecosystems.</title>
        <authorList>
            <person name="van Passel M.W."/>
            <person name="Kant R."/>
            <person name="Palva A."/>
            <person name="Copeland A."/>
            <person name="Lucas S."/>
            <person name="Lapidus A."/>
            <person name="Glavina del Rio T."/>
            <person name="Pitluck S."/>
            <person name="Goltsman E."/>
            <person name="Clum A."/>
            <person name="Sun H."/>
            <person name="Schmutz J."/>
            <person name="Larimer F.W."/>
            <person name="Land M.L."/>
            <person name="Hauser L."/>
            <person name="Kyrpides N."/>
            <person name="Mikhailova N."/>
            <person name="Richardson P.P."/>
            <person name="Janssen P.H."/>
            <person name="de Vos W.M."/>
            <person name="Smidt H."/>
        </authorList>
    </citation>
    <scope>NUCLEOTIDE SEQUENCE [LARGE SCALE GENOMIC DNA]</scope>
    <source>
        <strain>DSM 11246 / JCM 15787 / PB90-1</strain>
    </source>
</reference>
<comment type="similarity">
    <text evidence="1">Belongs to the UPF0173 family.</text>
</comment>
<gene>
    <name type="ordered locus">Oter_4201</name>
</gene>
<protein>
    <recommendedName>
        <fullName evidence="1">UPF0173 metal-dependent hydrolase Oter_4201</fullName>
    </recommendedName>
</protein>